<gene>
    <name type="primary">trbL</name>
</gene>
<keyword id="KW-1003">Cell membrane</keyword>
<keyword id="KW-0184">Conjugation</keyword>
<keyword id="KW-0472">Membrane</keyword>
<keyword id="KW-0614">Plasmid</keyword>
<keyword id="KW-0812">Transmembrane</keyword>
<keyword id="KW-1133">Transmembrane helix</keyword>
<reference key="1">
    <citation type="journal article" date="1996" name="J. Bacteriol.">
        <title>The conjugal transfer system of Agrobacterium tumefaciens octopine-type Ti plasmids is closely related to the transfer system of an IncP plasmid and distantly related to Ti plasmid vir genes.</title>
        <authorList>
            <person name="Alt-Morbe J."/>
            <person name="Stryker J.L."/>
            <person name="Fuqua C."/>
            <person name="Li P.L."/>
            <person name="Farrand S.K."/>
            <person name="Winans S.C."/>
        </authorList>
    </citation>
    <scope>NUCLEOTIDE SEQUENCE [GENOMIC DNA]</scope>
</reference>
<dbReference type="EMBL" id="AF242881">
    <property type="protein sequence ID" value="AAB95100.1"/>
    <property type="molecule type" value="Genomic_DNA"/>
</dbReference>
<dbReference type="RefSeq" id="NP_059754.1">
    <property type="nucleotide sequence ID" value="NC_002377.1"/>
</dbReference>
<dbReference type="RefSeq" id="WP_010892442.1">
    <property type="nucleotide sequence ID" value="NZ_QSNU01000012.1"/>
</dbReference>
<dbReference type="SMR" id="P54913"/>
<dbReference type="eggNOG" id="COG3846">
    <property type="taxonomic scope" value="Bacteria"/>
</dbReference>
<dbReference type="OrthoDB" id="7304151at2"/>
<dbReference type="GO" id="GO:0005886">
    <property type="term" value="C:plasma membrane"/>
    <property type="evidence" value="ECO:0007669"/>
    <property type="project" value="UniProtKB-SubCell"/>
</dbReference>
<dbReference type="GO" id="GO:0030255">
    <property type="term" value="P:protein secretion by the type IV secretion system"/>
    <property type="evidence" value="ECO:0007669"/>
    <property type="project" value="InterPro"/>
</dbReference>
<dbReference type="InterPro" id="IPR014150">
    <property type="entry name" value="Conjugal_tfr_TrbL"/>
</dbReference>
<dbReference type="InterPro" id="IPR007688">
    <property type="entry name" value="Conjugal_tfr_TrbL/VirB6"/>
</dbReference>
<dbReference type="NCBIfam" id="NF010415">
    <property type="entry name" value="PRK13841.1"/>
    <property type="match status" value="1"/>
</dbReference>
<dbReference type="NCBIfam" id="TIGR02783">
    <property type="entry name" value="TrbL_P"/>
    <property type="match status" value="1"/>
</dbReference>
<dbReference type="Pfam" id="PF04610">
    <property type="entry name" value="TrbL"/>
    <property type="match status" value="1"/>
</dbReference>
<evidence type="ECO:0000255" key="1"/>
<evidence type="ECO:0000256" key="2">
    <source>
        <dbReference type="SAM" id="MobiDB-lite"/>
    </source>
</evidence>
<evidence type="ECO:0000305" key="3"/>
<comment type="subcellular location">
    <subcellularLocation>
        <location evidence="3">Cell membrane</location>
        <topology evidence="3">Multi-pass membrane protein</topology>
    </subcellularLocation>
</comment>
<comment type="similarity">
    <text evidence="3">Belongs to the TrbL/VirB6 family.</text>
</comment>
<accession>P54913</accession>
<protein>
    <recommendedName>
        <fullName>Conjugal transfer protein TrbL</fullName>
    </recommendedName>
</protein>
<geneLocation type="plasmid">
    <name>pTiA6NC</name>
</geneLocation>
<proteinExistence type="inferred from homology"/>
<name>TRBL_RHIRD</name>
<sequence>MVVHPSPKLELAFVTIGFVLLASSPALAQQGQVLTTLENSVVTAAKGWETTVMNAARSLFWILAGIEVGIAAVWLAINAASLDSWFAELVKRIMFIGLFAFILDRGLEFAKAVVDSLYQIGAGGGSASPANIFDAGIRVATKMSEQAKFGLWEDNALAIAAVFAMVVVVVSFSLVAAIFVAVMVEMYVGLLAGMIMLGLGGSSYTKDFAVKYLVYAFSVGMKLMALVMIARIGSDILLGLAEAPTATSEQFITTLAIAGISVVVFVIAMYVPPILQGLVQGASVGGGMEAIRHGGQAASAALGAGFLTIGAANRGFAAASAARAGGASLAGAAMRGLEAGVGGAAGAVGSAAKDKAIGSPGAYAGSMLGLANAKLDQQSGRPGTPPPPPPINDKK</sequence>
<feature type="chain" id="PRO_0000065620" description="Conjugal transfer protein TrbL">
    <location>
        <begin position="1"/>
        <end position="395"/>
    </location>
</feature>
<feature type="transmembrane region" description="Helical" evidence="1">
    <location>
        <begin position="9"/>
        <end position="29"/>
    </location>
</feature>
<feature type="transmembrane region" description="Helical" evidence="1">
    <location>
        <begin position="59"/>
        <end position="79"/>
    </location>
</feature>
<feature type="transmembrane region" description="Helical" evidence="1">
    <location>
        <begin position="93"/>
        <end position="113"/>
    </location>
</feature>
<feature type="transmembrane region" description="Helical" evidence="1">
    <location>
        <begin position="162"/>
        <end position="182"/>
    </location>
</feature>
<feature type="transmembrane region" description="Helical" evidence="1">
    <location>
        <begin position="183"/>
        <end position="203"/>
    </location>
</feature>
<feature type="transmembrane region" description="Helical" evidence="1">
    <location>
        <begin position="209"/>
        <end position="229"/>
    </location>
</feature>
<feature type="transmembrane region" description="Helical" evidence="1">
    <location>
        <begin position="255"/>
        <end position="275"/>
    </location>
</feature>
<feature type="transmembrane region" description="Helical" evidence="1">
    <location>
        <begin position="302"/>
        <end position="322"/>
    </location>
</feature>
<feature type="transmembrane region" description="Helical" evidence="1">
    <location>
        <begin position="329"/>
        <end position="349"/>
    </location>
</feature>
<feature type="region of interest" description="Disordered" evidence="2">
    <location>
        <begin position="374"/>
        <end position="395"/>
    </location>
</feature>
<feature type="compositionally biased region" description="Pro residues" evidence="2">
    <location>
        <begin position="383"/>
        <end position="395"/>
    </location>
</feature>
<organism>
    <name type="scientific">Rhizobium radiobacter</name>
    <name type="common">Agrobacterium tumefaciens</name>
    <name type="synonym">Agrobacterium radiobacter</name>
    <dbReference type="NCBI Taxonomy" id="358"/>
    <lineage>
        <taxon>Bacteria</taxon>
        <taxon>Pseudomonadati</taxon>
        <taxon>Pseudomonadota</taxon>
        <taxon>Alphaproteobacteria</taxon>
        <taxon>Hyphomicrobiales</taxon>
        <taxon>Rhizobiaceae</taxon>
        <taxon>Rhizobium/Agrobacterium group</taxon>
        <taxon>Agrobacterium</taxon>
        <taxon>Agrobacterium tumefaciens complex</taxon>
    </lineage>
</organism>